<accession>Q4JT46</accession>
<sequence length="101" mass="11474">MAGQKIRIRLKAYDHEAIDASAKKIVETVTRTGARVVGPVPLPTEKNVYCVIRSPHKYKDSREHFEMRTHKRLIDILDPTPKTVDALMRIDLPASVDVNIQ</sequence>
<reference key="1">
    <citation type="journal article" date="2005" name="J. Bacteriol.">
        <title>Complete genome sequence and analysis of the multiresistant nosocomial pathogen Corynebacterium jeikeium K411, a lipid-requiring bacterium of the human skin flora.</title>
        <authorList>
            <person name="Tauch A."/>
            <person name="Kaiser O."/>
            <person name="Hain T."/>
            <person name="Goesmann A."/>
            <person name="Weisshaar B."/>
            <person name="Albersmeier A."/>
            <person name="Bekel T."/>
            <person name="Bischoff N."/>
            <person name="Brune I."/>
            <person name="Chakraborty T."/>
            <person name="Kalinowski J."/>
            <person name="Meyer F."/>
            <person name="Rupp O."/>
            <person name="Schneiker S."/>
            <person name="Viehoever P."/>
            <person name="Puehler A."/>
        </authorList>
    </citation>
    <scope>NUCLEOTIDE SEQUENCE [LARGE SCALE GENOMIC DNA]</scope>
    <source>
        <strain>K411</strain>
    </source>
</reference>
<comment type="function">
    <text evidence="1">Involved in the binding of tRNA to the ribosomes.</text>
</comment>
<comment type="subunit">
    <text evidence="1">Part of the 30S ribosomal subunit.</text>
</comment>
<comment type="similarity">
    <text evidence="1">Belongs to the universal ribosomal protein uS10 family.</text>
</comment>
<organism>
    <name type="scientific">Corynebacterium jeikeium (strain K411)</name>
    <dbReference type="NCBI Taxonomy" id="306537"/>
    <lineage>
        <taxon>Bacteria</taxon>
        <taxon>Bacillati</taxon>
        <taxon>Actinomycetota</taxon>
        <taxon>Actinomycetes</taxon>
        <taxon>Mycobacteriales</taxon>
        <taxon>Corynebacteriaceae</taxon>
        <taxon>Corynebacterium</taxon>
    </lineage>
</organism>
<dbReference type="EMBL" id="CR931997">
    <property type="protein sequence ID" value="CAI38011.1"/>
    <property type="molecule type" value="Genomic_DNA"/>
</dbReference>
<dbReference type="RefSeq" id="WP_010120790.1">
    <property type="nucleotide sequence ID" value="NC_007164.1"/>
</dbReference>
<dbReference type="SMR" id="Q4JT46"/>
<dbReference type="STRING" id="306537.jk1834"/>
<dbReference type="GeneID" id="82887854"/>
<dbReference type="KEGG" id="cjk:jk1834"/>
<dbReference type="eggNOG" id="COG0051">
    <property type="taxonomic scope" value="Bacteria"/>
</dbReference>
<dbReference type="HOGENOM" id="CLU_122625_1_3_11"/>
<dbReference type="OrthoDB" id="9804464at2"/>
<dbReference type="Proteomes" id="UP000000545">
    <property type="component" value="Chromosome"/>
</dbReference>
<dbReference type="GO" id="GO:1990904">
    <property type="term" value="C:ribonucleoprotein complex"/>
    <property type="evidence" value="ECO:0007669"/>
    <property type="project" value="UniProtKB-KW"/>
</dbReference>
<dbReference type="GO" id="GO:0005840">
    <property type="term" value="C:ribosome"/>
    <property type="evidence" value="ECO:0007669"/>
    <property type="project" value="UniProtKB-KW"/>
</dbReference>
<dbReference type="GO" id="GO:0003735">
    <property type="term" value="F:structural constituent of ribosome"/>
    <property type="evidence" value="ECO:0007669"/>
    <property type="project" value="InterPro"/>
</dbReference>
<dbReference type="GO" id="GO:0000049">
    <property type="term" value="F:tRNA binding"/>
    <property type="evidence" value="ECO:0007669"/>
    <property type="project" value="UniProtKB-UniRule"/>
</dbReference>
<dbReference type="GO" id="GO:0006412">
    <property type="term" value="P:translation"/>
    <property type="evidence" value="ECO:0007669"/>
    <property type="project" value="UniProtKB-UniRule"/>
</dbReference>
<dbReference type="FunFam" id="3.30.70.600:FF:000001">
    <property type="entry name" value="30S ribosomal protein S10"/>
    <property type="match status" value="1"/>
</dbReference>
<dbReference type="Gene3D" id="3.30.70.600">
    <property type="entry name" value="Ribosomal protein S10 domain"/>
    <property type="match status" value="1"/>
</dbReference>
<dbReference type="HAMAP" id="MF_00508">
    <property type="entry name" value="Ribosomal_uS10"/>
    <property type="match status" value="1"/>
</dbReference>
<dbReference type="InterPro" id="IPR001848">
    <property type="entry name" value="Ribosomal_uS10"/>
</dbReference>
<dbReference type="InterPro" id="IPR018268">
    <property type="entry name" value="Ribosomal_uS10_CS"/>
</dbReference>
<dbReference type="InterPro" id="IPR027486">
    <property type="entry name" value="Ribosomal_uS10_dom"/>
</dbReference>
<dbReference type="InterPro" id="IPR036838">
    <property type="entry name" value="Ribosomal_uS10_dom_sf"/>
</dbReference>
<dbReference type="NCBIfam" id="NF001861">
    <property type="entry name" value="PRK00596.1"/>
    <property type="match status" value="1"/>
</dbReference>
<dbReference type="NCBIfam" id="TIGR01049">
    <property type="entry name" value="rpsJ_bact"/>
    <property type="match status" value="1"/>
</dbReference>
<dbReference type="PANTHER" id="PTHR11700">
    <property type="entry name" value="30S RIBOSOMAL PROTEIN S10 FAMILY MEMBER"/>
    <property type="match status" value="1"/>
</dbReference>
<dbReference type="Pfam" id="PF00338">
    <property type="entry name" value="Ribosomal_S10"/>
    <property type="match status" value="1"/>
</dbReference>
<dbReference type="PRINTS" id="PR00971">
    <property type="entry name" value="RIBOSOMALS10"/>
</dbReference>
<dbReference type="SMART" id="SM01403">
    <property type="entry name" value="Ribosomal_S10"/>
    <property type="match status" value="1"/>
</dbReference>
<dbReference type="SUPFAM" id="SSF54999">
    <property type="entry name" value="Ribosomal protein S10"/>
    <property type="match status" value="1"/>
</dbReference>
<dbReference type="PROSITE" id="PS00361">
    <property type="entry name" value="RIBOSOMAL_S10"/>
    <property type="match status" value="1"/>
</dbReference>
<evidence type="ECO:0000255" key="1">
    <source>
        <dbReference type="HAMAP-Rule" id="MF_00508"/>
    </source>
</evidence>
<evidence type="ECO:0000305" key="2"/>
<gene>
    <name evidence="1" type="primary">rpsJ</name>
    <name type="ordered locus">jk1834</name>
</gene>
<proteinExistence type="inferred from homology"/>
<keyword id="KW-1185">Reference proteome</keyword>
<keyword id="KW-0687">Ribonucleoprotein</keyword>
<keyword id="KW-0689">Ribosomal protein</keyword>
<protein>
    <recommendedName>
        <fullName evidence="1">Small ribosomal subunit protein uS10</fullName>
    </recommendedName>
    <alternativeName>
        <fullName evidence="2">30S ribosomal protein S10</fullName>
    </alternativeName>
</protein>
<name>RS10_CORJK</name>
<feature type="chain" id="PRO_0000237034" description="Small ribosomal subunit protein uS10">
    <location>
        <begin position="1"/>
        <end position="101"/>
    </location>
</feature>